<protein>
    <recommendedName>
        <fullName>NADH-ubiquinone oxidoreductase chain 6</fullName>
        <ecNumber evidence="1">7.1.1.2</ecNumber>
    </recommendedName>
    <alternativeName>
        <fullName>NADH dehydrogenase subunit 6</fullName>
    </alternativeName>
</protein>
<reference key="1">
    <citation type="journal article" date="1989" name="J. Mol. Evol.">
        <title>The complete nucleotide sequence of the Rattus norvegicus mitochondrial genome: cryptic signals revealed by comparative analysis between vertebrates.</title>
        <authorList>
            <person name="Gadaleta G."/>
            <person name="Pepe G."/>
            <person name="de Candia G."/>
            <person name="Quagliariello C."/>
            <person name="Sbisa E."/>
            <person name="Saccone C."/>
        </authorList>
    </citation>
    <scope>NUCLEOTIDE SEQUENCE [GENOMIC DNA]</scope>
    <source>
        <strain>Wistar</strain>
    </source>
</reference>
<reference key="2">
    <citation type="journal article" date="2004" name="Nature">
        <title>Genome sequence of the Brown Norway rat yields insights into mammalian evolution.</title>
        <authorList>
            <person name="Gibbs R.A."/>
            <person name="Weinstock G.M."/>
            <person name="Metzker M.L."/>
            <person name="Muzny D.M."/>
            <person name="Sodergren E.J."/>
            <person name="Scherer S."/>
            <person name="Scott G."/>
            <person name="Steffen D."/>
            <person name="Worley K.C."/>
            <person name="Burch P.E."/>
            <person name="Okwuonu G."/>
            <person name="Hines S."/>
            <person name="Lewis L."/>
            <person name="Deramo C."/>
            <person name="Delgado O."/>
            <person name="Dugan-Rocha S."/>
            <person name="Miner G."/>
            <person name="Morgan M."/>
            <person name="Hawes A."/>
            <person name="Gill R."/>
            <person name="Holt R.A."/>
            <person name="Adams M.D."/>
            <person name="Amanatides P.G."/>
            <person name="Baden-Tillson H."/>
            <person name="Barnstead M."/>
            <person name="Chin S."/>
            <person name="Evans C.A."/>
            <person name="Ferriera S."/>
            <person name="Fosler C."/>
            <person name="Glodek A."/>
            <person name="Gu Z."/>
            <person name="Jennings D."/>
            <person name="Kraft C.L."/>
            <person name="Nguyen T."/>
            <person name="Pfannkoch C.M."/>
            <person name="Sitter C."/>
            <person name="Sutton G.G."/>
            <person name="Venter J.C."/>
            <person name="Woodage T."/>
            <person name="Smith D."/>
            <person name="Lee H.-M."/>
            <person name="Gustafson E."/>
            <person name="Cahill P."/>
            <person name="Kana A."/>
            <person name="Doucette-Stamm L."/>
            <person name="Weinstock K."/>
            <person name="Fechtel K."/>
            <person name="Weiss R.B."/>
            <person name="Dunn D.M."/>
            <person name="Green E.D."/>
            <person name="Blakesley R.W."/>
            <person name="Bouffard G.G."/>
            <person name="De Jong P.J."/>
            <person name="Osoegawa K."/>
            <person name="Zhu B."/>
            <person name="Marra M."/>
            <person name="Schein J."/>
            <person name="Bosdet I."/>
            <person name="Fjell C."/>
            <person name="Jones S."/>
            <person name="Krzywinski M."/>
            <person name="Mathewson C."/>
            <person name="Siddiqui A."/>
            <person name="Wye N."/>
            <person name="McPherson J."/>
            <person name="Zhao S."/>
            <person name="Fraser C.M."/>
            <person name="Shetty J."/>
            <person name="Shatsman S."/>
            <person name="Geer K."/>
            <person name="Chen Y."/>
            <person name="Abramzon S."/>
            <person name="Nierman W.C."/>
            <person name="Havlak P.H."/>
            <person name="Chen R."/>
            <person name="Durbin K.J."/>
            <person name="Egan A."/>
            <person name="Ren Y."/>
            <person name="Song X.-Z."/>
            <person name="Li B."/>
            <person name="Liu Y."/>
            <person name="Qin X."/>
            <person name="Cawley S."/>
            <person name="Cooney A.J."/>
            <person name="D'Souza L.M."/>
            <person name="Martin K."/>
            <person name="Wu J.Q."/>
            <person name="Gonzalez-Garay M.L."/>
            <person name="Jackson A.R."/>
            <person name="Kalafus K.J."/>
            <person name="McLeod M.P."/>
            <person name="Milosavljevic A."/>
            <person name="Virk D."/>
            <person name="Volkov A."/>
            <person name="Wheeler D.A."/>
            <person name="Zhang Z."/>
            <person name="Bailey J.A."/>
            <person name="Eichler E.E."/>
            <person name="Tuzun E."/>
            <person name="Birney E."/>
            <person name="Mongin E."/>
            <person name="Ureta-Vidal A."/>
            <person name="Woodwark C."/>
            <person name="Zdobnov E."/>
            <person name="Bork P."/>
            <person name="Suyama M."/>
            <person name="Torrents D."/>
            <person name="Alexandersson M."/>
            <person name="Trask B.J."/>
            <person name="Young J.M."/>
            <person name="Huang H."/>
            <person name="Wang H."/>
            <person name="Xing H."/>
            <person name="Daniels S."/>
            <person name="Gietzen D."/>
            <person name="Schmidt J."/>
            <person name="Stevens K."/>
            <person name="Vitt U."/>
            <person name="Wingrove J."/>
            <person name="Camara F."/>
            <person name="Mar Alba M."/>
            <person name="Abril J.F."/>
            <person name="Guigo R."/>
            <person name="Smit A."/>
            <person name="Dubchak I."/>
            <person name="Rubin E.M."/>
            <person name="Couronne O."/>
            <person name="Poliakov A."/>
            <person name="Huebner N."/>
            <person name="Ganten D."/>
            <person name="Goesele C."/>
            <person name="Hummel O."/>
            <person name="Kreitler T."/>
            <person name="Lee Y.-A."/>
            <person name="Monti J."/>
            <person name="Schulz H."/>
            <person name="Zimdahl H."/>
            <person name="Himmelbauer H."/>
            <person name="Lehrach H."/>
            <person name="Jacob H.J."/>
            <person name="Bromberg S."/>
            <person name="Gullings-Handley J."/>
            <person name="Jensen-Seaman M.I."/>
            <person name="Kwitek A.E."/>
            <person name="Lazar J."/>
            <person name="Pasko D."/>
            <person name="Tonellato P.J."/>
            <person name="Twigger S."/>
            <person name="Ponting C.P."/>
            <person name="Duarte J.M."/>
            <person name="Rice S."/>
            <person name="Goodstadt L."/>
            <person name="Beatson S.A."/>
            <person name="Emes R.D."/>
            <person name="Winter E.E."/>
            <person name="Webber C."/>
            <person name="Brandt P."/>
            <person name="Nyakatura G."/>
            <person name="Adetobi M."/>
            <person name="Chiaromonte F."/>
            <person name="Elnitski L."/>
            <person name="Eswara P."/>
            <person name="Hardison R.C."/>
            <person name="Hou M."/>
            <person name="Kolbe D."/>
            <person name="Makova K."/>
            <person name="Miller W."/>
            <person name="Nekrutenko A."/>
            <person name="Riemer C."/>
            <person name="Schwartz S."/>
            <person name="Taylor J."/>
            <person name="Yang S."/>
            <person name="Zhang Y."/>
            <person name="Lindpaintner K."/>
            <person name="Andrews T.D."/>
            <person name="Caccamo M."/>
            <person name="Clamp M."/>
            <person name="Clarke L."/>
            <person name="Curwen V."/>
            <person name="Durbin R.M."/>
            <person name="Eyras E."/>
            <person name="Searle S.M."/>
            <person name="Cooper G.M."/>
            <person name="Batzoglou S."/>
            <person name="Brudno M."/>
            <person name="Sidow A."/>
            <person name="Stone E.A."/>
            <person name="Payseur B.A."/>
            <person name="Bourque G."/>
            <person name="Lopez-Otin C."/>
            <person name="Puente X.S."/>
            <person name="Chakrabarti K."/>
            <person name="Chatterji S."/>
            <person name="Dewey C."/>
            <person name="Pachter L."/>
            <person name="Bray N."/>
            <person name="Yap V.B."/>
            <person name="Caspi A."/>
            <person name="Tesler G."/>
            <person name="Pevzner P.A."/>
            <person name="Haussler D."/>
            <person name="Roskin K.M."/>
            <person name="Baertsch R."/>
            <person name="Clawson H."/>
            <person name="Furey T.S."/>
            <person name="Hinrichs A.S."/>
            <person name="Karolchik D."/>
            <person name="Kent W.J."/>
            <person name="Rosenbloom K.R."/>
            <person name="Trumbower H."/>
            <person name="Weirauch M."/>
            <person name="Cooper D.N."/>
            <person name="Stenson P.D."/>
            <person name="Ma B."/>
            <person name="Brent M."/>
            <person name="Arumugam M."/>
            <person name="Shteynberg D."/>
            <person name="Copley R.R."/>
            <person name="Taylor M.S."/>
            <person name="Riethman H."/>
            <person name="Mudunuri U."/>
            <person name="Peterson J."/>
            <person name="Guyer M."/>
            <person name="Felsenfeld A."/>
            <person name="Old S."/>
            <person name="Mockrin S."/>
            <person name="Collins F.S."/>
        </authorList>
    </citation>
    <scope>NUCLEOTIDE SEQUENCE [LARGE SCALE GENOMIC DNA]</scope>
    <source>
        <strain>Brown Norway</strain>
    </source>
</reference>
<reference key="3">
    <citation type="journal article" date="1982" name="Gene">
        <title>Nucleotide sequence and evolution of the rat mitochondrial cytochrome b gene containing the ochre termination codon.</title>
        <authorList>
            <person name="Koike K."/>
            <person name="Kobayashi M."/>
            <person name="Yaginuma K."/>
            <person name="Taira M."/>
            <person name="Yoshida E."/>
            <person name="Imai M."/>
        </authorList>
    </citation>
    <scope>NUCLEOTIDE SEQUENCE [GENOMIC DNA] OF 1-79</scope>
</reference>
<reference key="4">
    <citation type="journal article" date="1992" name="Mutat. Res.">
        <title>Mitochondrial DNA copy number and mitochondrial DNA deletion in adult and senescent rats.</title>
        <authorList>
            <person name="Gadaleta M.N."/>
            <person name="Rainaldi G."/>
            <person name="Lezza A.M."/>
            <person name="Milella F."/>
            <person name="Fracasso F."/>
            <person name="Cantatore P."/>
        </authorList>
    </citation>
    <scope>NUCLEOTIDE SEQUENCE [GENOMIC DNA] OF 79-172</scope>
</reference>
<accession>P03926</accession>
<accession>Q9ZZM7</accession>
<dbReference type="EC" id="7.1.1.2" evidence="1"/>
<dbReference type="EMBL" id="X14848">
    <property type="protein sequence ID" value="CAA32965.1"/>
    <property type="molecule type" value="Genomic_DNA"/>
</dbReference>
<dbReference type="EMBL" id="AY172581">
    <property type="protein sequence ID" value="AAN77605.1"/>
    <property type="molecule type" value="Genomic_DNA"/>
</dbReference>
<dbReference type="EMBL" id="S46798">
    <property type="protein sequence ID" value="AAB23820.2"/>
    <property type="molecule type" value="Genomic_DNA"/>
</dbReference>
<dbReference type="PIR" id="S04758">
    <property type="entry name" value="DERTN6"/>
</dbReference>
<dbReference type="RefSeq" id="AP_004903.1">
    <property type="nucleotide sequence ID" value="AC_000022.2"/>
</dbReference>
<dbReference type="RefSeq" id="YP_665640.1">
    <property type="nucleotide sequence ID" value="NC_001665.2"/>
</dbReference>
<dbReference type="SMR" id="P03926"/>
<dbReference type="FunCoup" id="P03926">
    <property type="interactions" value="264"/>
</dbReference>
<dbReference type="STRING" id="10116.ENSRNOP00000045645"/>
<dbReference type="PaxDb" id="10116-ENSRNOP00000045645"/>
<dbReference type="Ensembl" id="ENSRNOT00000051268.3">
    <property type="protein sequence ID" value="ENSRNOP00000045645.3"/>
    <property type="gene ID" value="ENSRNOG00000029042.3"/>
</dbReference>
<dbReference type="GeneID" id="26203"/>
<dbReference type="KEGG" id="rno:26203"/>
<dbReference type="AGR" id="RGD:620561"/>
<dbReference type="CTD" id="4541"/>
<dbReference type="RGD" id="620561">
    <property type="gene designation" value="Mt-nd6"/>
</dbReference>
<dbReference type="eggNOG" id="ENOG502S2Q2">
    <property type="taxonomic scope" value="Eukaryota"/>
</dbReference>
<dbReference type="GeneTree" id="ENSGT00390000003988"/>
<dbReference type="HOGENOM" id="CLU_129718_0_0_1"/>
<dbReference type="InParanoid" id="P03926"/>
<dbReference type="OMA" id="WVIYDTG"/>
<dbReference type="OrthoDB" id="66147at9989"/>
<dbReference type="Reactome" id="R-RNO-611105">
    <property type="pathway name" value="Respiratory electron transport"/>
</dbReference>
<dbReference type="Reactome" id="R-RNO-6799198">
    <property type="pathway name" value="Complex I biogenesis"/>
</dbReference>
<dbReference type="PRO" id="PR:P03926"/>
<dbReference type="Proteomes" id="UP000002494">
    <property type="component" value="Mitochondrion"/>
</dbReference>
<dbReference type="Bgee" id="ENSRNOG00000029042">
    <property type="expression patterns" value="Expressed in cerebellum and 19 other cell types or tissues"/>
</dbReference>
<dbReference type="ExpressionAtlas" id="P03926">
    <property type="expression patterns" value="baseline and differential"/>
</dbReference>
<dbReference type="GO" id="GO:0005743">
    <property type="term" value="C:mitochondrial inner membrane"/>
    <property type="evidence" value="ECO:0000250"/>
    <property type="project" value="UniProtKB"/>
</dbReference>
<dbReference type="GO" id="GO:0005739">
    <property type="term" value="C:mitochondrion"/>
    <property type="evidence" value="ECO:0000318"/>
    <property type="project" value="GO_Central"/>
</dbReference>
<dbReference type="GO" id="GO:0045271">
    <property type="term" value="C:respiratory chain complex I"/>
    <property type="evidence" value="ECO:0000266"/>
    <property type="project" value="RGD"/>
</dbReference>
<dbReference type="GO" id="GO:0008137">
    <property type="term" value="F:NADH dehydrogenase (ubiquinone) activity"/>
    <property type="evidence" value="ECO:0000250"/>
    <property type="project" value="UniProtKB"/>
</dbReference>
<dbReference type="GO" id="GO:0006120">
    <property type="term" value="P:mitochondrial electron transport, NADH to ubiquinone"/>
    <property type="evidence" value="ECO:0000250"/>
    <property type="project" value="UniProtKB"/>
</dbReference>
<dbReference type="GO" id="GO:0032981">
    <property type="term" value="P:mitochondrial respiratory chain complex I assembly"/>
    <property type="evidence" value="ECO:0000250"/>
    <property type="project" value="UniProtKB"/>
</dbReference>
<dbReference type="GO" id="GO:0042220">
    <property type="term" value="P:response to cocaine"/>
    <property type="evidence" value="ECO:0000270"/>
    <property type="project" value="RGD"/>
</dbReference>
<dbReference type="GO" id="GO:0042542">
    <property type="term" value="P:response to hydrogen peroxide"/>
    <property type="evidence" value="ECO:0000270"/>
    <property type="project" value="RGD"/>
</dbReference>
<dbReference type="GO" id="GO:0035094">
    <property type="term" value="P:response to nicotine"/>
    <property type="evidence" value="ECO:0000270"/>
    <property type="project" value="RGD"/>
</dbReference>
<dbReference type="FunFam" id="1.20.120.1200:FF:000015">
    <property type="entry name" value="NADH-ubiquinone oxidoreductase chain 6"/>
    <property type="match status" value="1"/>
</dbReference>
<dbReference type="Gene3D" id="1.20.120.1200">
    <property type="entry name" value="NADH-ubiquinone/plastoquinone oxidoreductase chain 6, subunit NuoJ"/>
    <property type="match status" value="1"/>
</dbReference>
<dbReference type="InterPro" id="IPR050269">
    <property type="entry name" value="ComplexI_Subunit6"/>
</dbReference>
<dbReference type="InterPro" id="IPR001457">
    <property type="entry name" value="NADH_UbQ/plastoQ_OxRdtase_su6"/>
</dbReference>
<dbReference type="InterPro" id="IPR042106">
    <property type="entry name" value="Nuo/plastoQ_OxRdtase_6_NuoJ"/>
</dbReference>
<dbReference type="PANTHER" id="PTHR11435">
    <property type="entry name" value="NADH UBIQUINONE OXIDOREDUCTASE SUBUNIT ND6"/>
    <property type="match status" value="1"/>
</dbReference>
<dbReference type="PANTHER" id="PTHR11435:SF1">
    <property type="entry name" value="NADH-UBIQUINONE OXIDOREDUCTASE CHAIN 6"/>
    <property type="match status" value="1"/>
</dbReference>
<dbReference type="Pfam" id="PF00499">
    <property type="entry name" value="Oxidored_q3"/>
    <property type="match status" value="1"/>
</dbReference>
<feature type="chain" id="PRO_0000118326" description="NADH-ubiquinone oxidoreductase chain 6">
    <location>
        <begin position="1"/>
        <end position="172"/>
    </location>
</feature>
<feature type="transmembrane region" description="Helical" evidence="3">
    <location>
        <begin position="1"/>
        <end position="21"/>
    </location>
</feature>
<feature type="transmembrane region" description="Helical" evidence="3">
    <location>
        <begin position="26"/>
        <end position="48"/>
    </location>
</feature>
<feature type="transmembrane region" description="Helical" evidence="3">
    <location>
        <begin position="52"/>
        <end position="74"/>
    </location>
</feature>
<feature type="transmembrane region" description="Helical" evidence="3">
    <location>
        <begin position="86"/>
        <end position="106"/>
    </location>
</feature>
<feature type="transmembrane region" description="Helical" evidence="3">
    <location>
        <begin position="147"/>
        <end position="167"/>
    </location>
</feature>
<feature type="sequence conflict" description="In Ref. 1; CAA32965." evidence="4" ref="1">
    <original>L</original>
    <variation>F</variation>
    <location>
        <position position="30"/>
    </location>
</feature>
<feature type="sequence conflict" description="In Ref. 4; AAB23820." evidence="4" ref="4">
    <original>L</original>
    <variation>M</variation>
    <location>
        <position position="159"/>
    </location>
</feature>
<keyword id="KW-0249">Electron transport</keyword>
<keyword id="KW-0472">Membrane</keyword>
<keyword id="KW-0496">Mitochondrion</keyword>
<keyword id="KW-0999">Mitochondrion inner membrane</keyword>
<keyword id="KW-0520">NAD</keyword>
<keyword id="KW-1185">Reference proteome</keyword>
<keyword id="KW-0679">Respiratory chain</keyword>
<keyword id="KW-1278">Translocase</keyword>
<keyword id="KW-0812">Transmembrane</keyword>
<keyword id="KW-1133">Transmembrane helix</keyword>
<keyword id="KW-0813">Transport</keyword>
<keyword id="KW-0830">Ubiquinone</keyword>
<proteinExistence type="inferred from homology"/>
<evidence type="ECO:0000250" key="1">
    <source>
        <dbReference type="UniProtKB" id="P03923"/>
    </source>
</evidence>
<evidence type="ECO:0000250" key="2">
    <source>
        <dbReference type="UniProtKB" id="P03924"/>
    </source>
</evidence>
<evidence type="ECO:0000255" key="3"/>
<evidence type="ECO:0000305" key="4"/>
<evidence type="ECO:0000312" key="5">
    <source>
        <dbReference type="RGD" id="620561"/>
    </source>
</evidence>
<organism>
    <name type="scientific">Rattus norvegicus</name>
    <name type="common">Rat</name>
    <dbReference type="NCBI Taxonomy" id="10116"/>
    <lineage>
        <taxon>Eukaryota</taxon>
        <taxon>Metazoa</taxon>
        <taxon>Chordata</taxon>
        <taxon>Craniata</taxon>
        <taxon>Vertebrata</taxon>
        <taxon>Euteleostomi</taxon>
        <taxon>Mammalia</taxon>
        <taxon>Eutheria</taxon>
        <taxon>Euarchontoglires</taxon>
        <taxon>Glires</taxon>
        <taxon>Rodentia</taxon>
        <taxon>Myomorpha</taxon>
        <taxon>Muroidea</taxon>
        <taxon>Muridae</taxon>
        <taxon>Murinae</taxon>
        <taxon>Rattus</taxon>
    </lineage>
</organism>
<gene>
    <name evidence="5" type="primary">Mt-nd6</name>
    <name type="synonym">Mtnd6</name>
    <name type="synonym">Nd6</name>
</gene>
<geneLocation type="mitochondrion"/>
<sequence>MTNYMFILSLLFLTGCLGLALKPSPIYGGLGLIVSGCIGCLMVLGFGGSFLGLMVFLIYLGGMLVVFGYTTAMATEEYPETWGSNWFIFSFFVLGLFMELVVFYLFSLNNKVELVDFDSLGDWLMYEIDDVGVMLEGGIGVAAIYSCATWMMVVAGWSLFAGIFIIIEITRD</sequence>
<name>NU6M_RAT</name>
<comment type="function">
    <text evidence="1">Core subunit of the mitochondrial membrane respiratory chain NADH dehydrogenase (Complex I) which catalyzes electron transfer from NADH through the respiratory chain, using ubiquinone as an electron acceptor. Essential for the catalytic activity and assembly of complex I.</text>
</comment>
<comment type="catalytic activity">
    <reaction evidence="1">
        <text>a ubiquinone + NADH + 5 H(+)(in) = a ubiquinol + NAD(+) + 4 H(+)(out)</text>
        <dbReference type="Rhea" id="RHEA:29091"/>
        <dbReference type="Rhea" id="RHEA-COMP:9565"/>
        <dbReference type="Rhea" id="RHEA-COMP:9566"/>
        <dbReference type="ChEBI" id="CHEBI:15378"/>
        <dbReference type="ChEBI" id="CHEBI:16389"/>
        <dbReference type="ChEBI" id="CHEBI:17976"/>
        <dbReference type="ChEBI" id="CHEBI:57540"/>
        <dbReference type="ChEBI" id="CHEBI:57945"/>
        <dbReference type="EC" id="7.1.1.2"/>
    </reaction>
</comment>
<comment type="subunit">
    <text evidence="2">Core subunit of respiratory chain NADH dehydrogenase (Complex I) which is composed of 45 different subunits.</text>
</comment>
<comment type="subcellular location">
    <subcellularLocation>
        <location evidence="2">Mitochondrion inner membrane</location>
        <topology evidence="3">Multi-pass membrane protein</topology>
    </subcellularLocation>
</comment>
<comment type="similarity">
    <text evidence="4">Belongs to the complex I subunit 6 family.</text>
</comment>